<dbReference type="EMBL" id="EU496107">
    <property type="protein sequence ID" value="ACA63847.1"/>
    <property type="molecule type" value="mRNA"/>
</dbReference>
<dbReference type="ConoServer" id="2822">
    <property type="toxin name" value="Ac8.1 precursor"/>
</dbReference>
<dbReference type="GO" id="GO:0005576">
    <property type="term" value="C:extracellular region"/>
    <property type="evidence" value="ECO:0007669"/>
    <property type="project" value="UniProtKB-SubCell"/>
</dbReference>
<dbReference type="GO" id="GO:0090729">
    <property type="term" value="F:toxin activity"/>
    <property type="evidence" value="ECO:0007669"/>
    <property type="project" value="UniProtKB-KW"/>
</dbReference>
<evidence type="ECO:0000250" key="1"/>
<evidence type="ECO:0000255" key="2"/>
<evidence type="ECO:0000305" key="3"/>
<keyword id="KW-1015">Disulfide bond</keyword>
<keyword id="KW-0528">Neurotoxin</keyword>
<keyword id="KW-0873">Pyrrolidone carboxylic acid</keyword>
<keyword id="KW-0964">Secreted</keyword>
<keyword id="KW-0732">Signal</keyword>
<keyword id="KW-0800">Toxin</keyword>
<name>CS81_CONAH</name>
<proteinExistence type="evidence at transcript level"/>
<accession>B2CI28</accession>
<protein>
    <recommendedName>
        <fullName>Conotoxin Ac8.1</fullName>
    </recommendedName>
</protein>
<feature type="signal peptide" evidence="2">
    <location>
        <begin position="1" status="less than"/>
        <end position="19"/>
    </location>
</feature>
<feature type="propeptide" id="PRO_0000346131" evidence="1">
    <location>
        <begin position="20"/>
        <end position="44"/>
    </location>
</feature>
<feature type="peptide" id="PRO_0000346132" description="Conotoxin Ac8.1">
    <location>
        <begin position="45"/>
        <end position="92"/>
    </location>
</feature>
<feature type="modified residue" description="Pyrrolidone carboxylic acid" evidence="1">
    <location>
        <position position="45"/>
    </location>
</feature>
<feature type="non-terminal residue">
    <location>
        <position position="1"/>
    </location>
</feature>
<reference key="1">
    <citation type="journal article" date="2008" name="Toxicon">
        <title>Identification of a novel S-superfamily conotoxin from vermivorous Conus caracteristicus.</title>
        <authorList>
            <person name="Liu L."/>
            <person name="Wu X."/>
            <person name="Yuan D."/>
            <person name="Chi C."/>
            <person name="Wang C."/>
        </authorList>
    </citation>
    <scope>NUCLEOTIDE SEQUENCE [MRNA]</scope>
    <source>
        <tissue>Venom duct</tissue>
    </source>
</reference>
<comment type="subcellular location">
    <subcellularLocation>
        <location evidence="1">Secreted</location>
    </subcellularLocation>
</comment>
<comment type="tissue specificity">
    <text>Expressed by the venom duct.</text>
</comment>
<comment type="domain">
    <text>The cysteine framework is VIII (C-C-C-C-C-C-C-C-C-C).</text>
</comment>
<comment type="PTM">
    <text evidence="3">Contains 5 disulfide bonds.</text>
</comment>
<comment type="similarity">
    <text evidence="3">Belongs to the conotoxin S superfamily.</text>
</comment>
<sequence length="92" mass="10157">LKMGAMFVLLLLFTLASSQQEGDVQARKTSLKSDFYRALRQYDRQCTLVNNCDRNGERACNGDCSCEGQICKCGYRVSPGKSGCACTCRNAK</sequence>
<organism>
    <name type="scientific">Conus achatinus</name>
    <name type="common">Little frog cone</name>
    <dbReference type="NCBI Taxonomy" id="369967"/>
    <lineage>
        <taxon>Eukaryota</taxon>
        <taxon>Metazoa</taxon>
        <taxon>Spiralia</taxon>
        <taxon>Lophotrochozoa</taxon>
        <taxon>Mollusca</taxon>
        <taxon>Gastropoda</taxon>
        <taxon>Caenogastropoda</taxon>
        <taxon>Neogastropoda</taxon>
        <taxon>Conoidea</taxon>
        <taxon>Conidae</taxon>
        <taxon>Conus</taxon>
        <taxon>Pionoconus</taxon>
    </lineage>
</organism>